<protein>
    <recommendedName>
        <fullName>UPF0389 protein CG9231</fullName>
    </recommendedName>
</protein>
<organism>
    <name type="scientific">Drosophila melanogaster</name>
    <name type="common">Fruit fly</name>
    <dbReference type="NCBI Taxonomy" id="7227"/>
    <lineage>
        <taxon>Eukaryota</taxon>
        <taxon>Metazoa</taxon>
        <taxon>Ecdysozoa</taxon>
        <taxon>Arthropoda</taxon>
        <taxon>Hexapoda</taxon>
        <taxon>Insecta</taxon>
        <taxon>Pterygota</taxon>
        <taxon>Neoptera</taxon>
        <taxon>Endopterygota</taxon>
        <taxon>Diptera</taxon>
        <taxon>Brachycera</taxon>
        <taxon>Muscomorpha</taxon>
        <taxon>Ephydroidea</taxon>
        <taxon>Drosophilidae</taxon>
        <taxon>Drosophila</taxon>
        <taxon>Sophophora</taxon>
    </lineage>
</organism>
<comment type="subcellular location">
    <subcellularLocation>
        <location evidence="3">Membrane</location>
        <topology evidence="3">Single-pass membrane protein</topology>
    </subcellularLocation>
</comment>
<comment type="similarity">
    <text evidence="3">Belongs to the UPF0389 family.</text>
</comment>
<reference key="1">
    <citation type="journal article" date="2000" name="Science">
        <title>The genome sequence of Drosophila melanogaster.</title>
        <authorList>
            <person name="Adams M.D."/>
            <person name="Celniker S.E."/>
            <person name="Holt R.A."/>
            <person name="Evans C.A."/>
            <person name="Gocayne J.D."/>
            <person name="Amanatides P.G."/>
            <person name="Scherer S.E."/>
            <person name="Li P.W."/>
            <person name="Hoskins R.A."/>
            <person name="Galle R.F."/>
            <person name="George R.A."/>
            <person name="Lewis S.E."/>
            <person name="Richards S."/>
            <person name="Ashburner M."/>
            <person name="Henderson S.N."/>
            <person name="Sutton G.G."/>
            <person name="Wortman J.R."/>
            <person name="Yandell M.D."/>
            <person name="Zhang Q."/>
            <person name="Chen L.X."/>
            <person name="Brandon R.C."/>
            <person name="Rogers Y.-H.C."/>
            <person name="Blazej R.G."/>
            <person name="Champe M."/>
            <person name="Pfeiffer B.D."/>
            <person name="Wan K.H."/>
            <person name="Doyle C."/>
            <person name="Baxter E.G."/>
            <person name="Helt G."/>
            <person name="Nelson C.R."/>
            <person name="Miklos G.L.G."/>
            <person name="Abril J.F."/>
            <person name="Agbayani A."/>
            <person name="An H.-J."/>
            <person name="Andrews-Pfannkoch C."/>
            <person name="Baldwin D."/>
            <person name="Ballew R.M."/>
            <person name="Basu A."/>
            <person name="Baxendale J."/>
            <person name="Bayraktaroglu L."/>
            <person name="Beasley E.M."/>
            <person name="Beeson K.Y."/>
            <person name="Benos P.V."/>
            <person name="Berman B.P."/>
            <person name="Bhandari D."/>
            <person name="Bolshakov S."/>
            <person name="Borkova D."/>
            <person name="Botchan M.R."/>
            <person name="Bouck J."/>
            <person name="Brokstein P."/>
            <person name="Brottier P."/>
            <person name="Burtis K.C."/>
            <person name="Busam D.A."/>
            <person name="Butler H."/>
            <person name="Cadieu E."/>
            <person name="Center A."/>
            <person name="Chandra I."/>
            <person name="Cherry J.M."/>
            <person name="Cawley S."/>
            <person name="Dahlke C."/>
            <person name="Davenport L.B."/>
            <person name="Davies P."/>
            <person name="de Pablos B."/>
            <person name="Delcher A."/>
            <person name="Deng Z."/>
            <person name="Mays A.D."/>
            <person name="Dew I."/>
            <person name="Dietz S.M."/>
            <person name="Dodson K."/>
            <person name="Doup L.E."/>
            <person name="Downes M."/>
            <person name="Dugan-Rocha S."/>
            <person name="Dunkov B.C."/>
            <person name="Dunn P."/>
            <person name="Durbin K.J."/>
            <person name="Evangelista C.C."/>
            <person name="Ferraz C."/>
            <person name="Ferriera S."/>
            <person name="Fleischmann W."/>
            <person name="Fosler C."/>
            <person name="Gabrielian A.E."/>
            <person name="Garg N.S."/>
            <person name="Gelbart W.M."/>
            <person name="Glasser K."/>
            <person name="Glodek A."/>
            <person name="Gong F."/>
            <person name="Gorrell J.H."/>
            <person name="Gu Z."/>
            <person name="Guan P."/>
            <person name="Harris M."/>
            <person name="Harris N.L."/>
            <person name="Harvey D.A."/>
            <person name="Heiman T.J."/>
            <person name="Hernandez J.R."/>
            <person name="Houck J."/>
            <person name="Hostin D."/>
            <person name="Houston K.A."/>
            <person name="Howland T.J."/>
            <person name="Wei M.-H."/>
            <person name="Ibegwam C."/>
            <person name="Jalali M."/>
            <person name="Kalush F."/>
            <person name="Karpen G.H."/>
            <person name="Ke Z."/>
            <person name="Kennison J.A."/>
            <person name="Ketchum K.A."/>
            <person name="Kimmel B.E."/>
            <person name="Kodira C.D."/>
            <person name="Kraft C.L."/>
            <person name="Kravitz S."/>
            <person name="Kulp D."/>
            <person name="Lai Z."/>
            <person name="Lasko P."/>
            <person name="Lei Y."/>
            <person name="Levitsky A.A."/>
            <person name="Li J.H."/>
            <person name="Li Z."/>
            <person name="Liang Y."/>
            <person name="Lin X."/>
            <person name="Liu X."/>
            <person name="Mattei B."/>
            <person name="McIntosh T.C."/>
            <person name="McLeod M.P."/>
            <person name="McPherson D."/>
            <person name="Merkulov G."/>
            <person name="Milshina N.V."/>
            <person name="Mobarry C."/>
            <person name="Morris J."/>
            <person name="Moshrefi A."/>
            <person name="Mount S.M."/>
            <person name="Moy M."/>
            <person name="Murphy B."/>
            <person name="Murphy L."/>
            <person name="Muzny D.M."/>
            <person name="Nelson D.L."/>
            <person name="Nelson D.R."/>
            <person name="Nelson K.A."/>
            <person name="Nixon K."/>
            <person name="Nusskern D.R."/>
            <person name="Pacleb J.M."/>
            <person name="Palazzolo M."/>
            <person name="Pittman G.S."/>
            <person name="Pan S."/>
            <person name="Pollard J."/>
            <person name="Puri V."/>
            <person name="Reese M.G."/>
            <person name="Reinert K."/>
            <person name="Remington K."/>
            <person name="Saunders R.D.C."/>
            <person name="Scheeler F."/>
            <person name="Shen H."/>
            <person name="Shue B.C."/>
            <person name="Siden-Kiamos I."/>
            <person name="Simpson M."/>
            <person name="Skupski M.P."/>
            <person name="Smith T.J."/>
            <person name="Spier E."/>
            <person name="Spradling A.C."/>
            <person name="Stapleton M."/>
            <person name="Strong R."/>
            <person name="Sun E."/>
            <person name="Svirskas R."/>
            <person name="Tector C."/>
            <person name="Turner R."/>
            <person name="Venter E."/>
            <person name="Wang A.H."/>
            <person name="Wang X."/>
            <person name="Wang Z.-Y."/>
            <person name="Wassarman D.A."/>
            <person name="Weinstock G.M."/>
            <person name="Weissenbach J."/>
            <person name="Williams S.M."/>
            <person name="Woodage T."/>
            <person name="Worley K.C."/>
            <person name="Wu D."/>
            <person name="Yang S."/>
            <person name="Yao Q.A."/>
            <person name="Ye J."/>
            <person name="Yeh R.-F."/>
            <person name="Zaveri J.S."/>
            <person name="Zhan M."/>
            <person name="Zhang G."/>
            <person name="Zhao Q."/>
            <person name="Zheng L."/>
            <person name="Zheng X.H."/>
            <person name="Zhong F.N."/>
            <person name="Zhong W."/>
            <person name="Zhou X."/>
            <person name="Zhu S.C."/>
            <person name="Zhu X."/>
            <person name="Smith H.O."/>
            <person name="Gibbs R.A."/>
            <person name="Myers E.W."/>
            <person name="Rubin G.M."/>
            <person name="Venter J.C."/>
        </authorList>
    </citation>
    <scope>NUCLEOTIDE SEQUENCE [LARGE SCALE GENOMIC DNA]</scope>
    <source>
        <strain>Berkeley</strain>
    </source>
</reference>
<reference key="2">
    <citation type="journal article" date="2002" name="Genome Biol.">
        <title>Annotation of the Drosophila melanogaster euchromatic genome: a systematic review.</title>
        <authorList>
            <person name="Misra S."/>
            <person name="Crosby M.A."/>
            <person name="Mungall C.J."/>
            <person name="Matthews B.B."/>
            <person name="Campbell K.S."/>
            <person name="Hradecky P."/>
            <person name="Huang Y."/>
            <person name="Kaminker J.S."/>
            <person name="Millburn G.H."/>
            <person name="Prochnik S.E."/>
            <person name="Smith C.D."/>
            <person name="Tupy J.L."/>
            <person name="Whitfield E.J."/>
            <person name="Bayraktaroglu L."/>
            <person name="Berman B.P."/>
            <person name="Bettencourt B.R."/>
            <person name="Celniker S.E."/>
            <person name="de Grey A.D.N.J."/>
            <person name="Drysdale R.A."/>
            <person name="Harris N.L."/>
            <person name="Richter J."/>
            <person name="Russo S."/>
            <person name="Schroeder A.J."/>
            <person name="Shu S.Q."/>
            <person name="Stapleton M."/>
            <person name="Yamada C."/>
            <person name="Ashburner M."/>
            <person name="Gelbart W.M."/>
            <person name="Rubin G.M."/>
            <person name="Lewis S.E."/>
        </authorList>
    </citation>
    <scope>GENOME REANNOTATION</scope>
    <source>
        <strain>Berkeley</strain>
    </source>
</reference>
<reference key="3">
    <citation type="journal article" date="2002" name="Genome Biol.">
        <title>A Drosophila full-length cDNA resource.</title>
        <authorList>
            <person name="Stapleton M."/>
            <person name="Carlson J.W."/>
            <person name="Brokstein P."/>
            <person name="Yu C."/>
            <person name="Champe M."/>
            <person name="George R.A."/>
            <person name="Guarin H."/>
            <person name="Kronmiller B."/>
            <person name="Pacleb J.M."/>
            <person name="Park S."/>
            <person name="Wan K.H."/>
            <person name="Rubin G.M."/>
            <person name="Celniker S.E."/>
        </authorList>
    </citation>
    <scope>NUCLEOTIDE SEQUENCE [LARGE SCALE MRNA]</scope>
    <source>
        <strain>Berkeley</strain>
        <tissue>Embryo</tissue>
    </source>
</reference>
<reference key="4">
    <citation type="journal article" date="2007" name="Glycobiology">
        <title>Identification of N-glycosylated proteins from the central nervous system of Drosophila melanogaster.</title>
        <authorList>
            <person name="Koles K."/>
            <person name="Lim J.-M."/>
            <person name="Aoki K."/>
            <person name="Porterfield M."/>
            <person name="Tiemeyer M."/>
            <person name="Wells L."/>
            <person name="Panin V."/>
        </authorList>
    </citation>
    <scope>GLYCOSYLATION [LARGE SCALE ANALYSIS] AT ASN-112</scope>
    <scope>IDENTIFICATION BY MASS SPECTROMETRY</scope>
    <source>
        <strain>Oregon-R</strain>
        <tissue>Head</tissue>
    </source>
</reference>
<evidence type="ECO:0000255" key="1"/>
<evidence type="ECO:0000269" key="2">
    <source>
    </source>
</evidence>
<evidence type="ECO:0000305" key="3"/>
<keyword id="KW-0325">Glycoprotein</keyword>
<keyword id="KW-0472">Membrane</keyword>
<keyword id="KW-1185">Reference proteome</keyword>
<keyword id="KW-0812">Transmembrane</keyword>
<keyword id="KW-1133">Transmembrane helix</keyword>
<dbReference type="EMBL" id="AE014296">
    <property type="protein sequence ID" value="AAF49143.1"/>
    <property type="molecule type" value="Genomic_DNA"/>
</dbReference>
<dbReference type="EMBL" id="AY094812">
    <property type="protein sequence ID" value="AAM11165.1"/>
    <property type="molecule type" value="mRNA"/>
</dbReference>
<dbReference type="RefSeq" id="NP_001287120.1">
    <property type="nucleotide sequence ID" value="NM_001300191.1"/>
</dbReference>
<dbReference type="RefSeq" id="NP_649128.1">
    <property type="nucleotide sequence ID" value="NM_140871.3"/>
</dbReference>
<dbReference type="SMR" id="Q9VW12"/>
<dbReference type="FunCoup" id="Q9VW12">
    <property type="interactions" value="843"/>
</dbReference>
<dbReference type="STRING" id="7227.FBpp0311248"/>
<dbReference type="GlyGen" id="Q9VW12">
    <property type="glycosylation" value="1 site"/>
</dbReference>
<dbReference type="iPTMnet" id="Q9VW12"/>
<dbReference type="PaxDb" id="7227-FBpp0074740"/>
<dbReference type="DNASU" id="40130"/>
<dbReference type="EnsemblMetazoa" id="FBtr0074972">
    <property type="protein sequence ID" value="FBpp0074740"/>
    <property type="gene ID" value="FBgn0036887"/>
</dbReference>
<dbReference type="EnsemblMetazoa" id="FBtr0344994">
    <property type="protein sequence ID" value="FBpp0311248"/>
    <property type="gene ID" value="FBgn0036887"/>
</dbReference>
<dbReference type="GeneID" id="40130"/>
<dbReference type="KEGG" id="dme:Dmel_CG9231"/>
<dbReference type="UCSC" id="CG9231-RA">
    <property type="organism name" value="d. melanogaster"/>
</dbReference>
<dbReference type="AGR" id="FB:FBgn0036887"/>
<dbReference type="FlyBase" id="FBgn0036887">
    <property type="gene designation" value="CG9231"/>
</dbReference>
<dbReference type="VEuPathDB" id="VectorBase:FBgn0036887"/>
<dbReference type="eggNOG" id="ENOG502S8IU">
    <property type="taxonomic scope" value="Eukaryota"/>
</dbReference>
<dbReference type="HOGENOM" id="CLU_122911_3_0_1"/>
<dbReference type="InParanoid" id="Q9VW12"/>
<dbReference type="OMA" id="WHKQFNE"/>
<dbReference type="OrthoDB" id="8193498at2759"/>
<dbReference type="PhylomeDB" id="Q9VW12"/>
<dbReference type="BioGRID-ORCS" id="40130">
    <property type="hits" value="0 hits in 3 CRISPR screens"/>
</dbReference>
<dbReference type="GenomeRNAi" id="40130"/>
<dbReference type="PRO" id="PR:Q9VW12"/>
<dbReference type="Proteomes" id="UP000000803">
    <property type="component" value="Chromosome 3L"/>
</dbReference>
<dbReference type="Bgee" id="FBgn0036887">
    <property type="expression patterns" value="Expressed in secondary oocyte and 143 other cell types or tissues"/>
</dbReference>
<dbReference type="ExpressionAtlas" id="Q9VW12">
    <property type="expression patterns" value="baseline and differential"/>
</dbReference>
<dbReference type="GO" id="GO:0005829">
    <property type="term" value="C:cytosol"/>
    <property type="evidence" value="ECO:0000250"/>
    <property type="project" value="FlyBase"/>
</dbReference>
<dbReference type="GO" id="GO:0016020">
    <property type="term" value="C:membrane"/>
    <property type="evidence" value="ECO:0007669"/>
    <property type="project" value="UniProtKB-SubCell"/>
</dbReference>
<dbReference type="GO" id="GO:0005739">
    <property type="term" value="C:mitochondrion"/>
    <property type="evidence" value="ECO:0000250"/>
    <property type="project" value="FlyBase"/>
</dbReference>
<dbReference type="GO" id="GO:0071456">
    <property type="term" value="P:cellular response to hypoxia"/>
    <property type="evidence" value="ECO:0000250"/>
    <property type="project" value="FlyBase"/>
</dbReference>
<dbReference type="GO" id="GO:0043065">
    <property type="term" value="P:positive regulation of apoptotic process"/>
    <property type="evidence" value="ECO:0000250"/>
    <property type="project" value="FlyBase"/>
</dbReference>
<dbReference type="GO" id="GO:0090200">
    <property type="term" value="P:positive regulation of release of cytochrome c from mitochondria"/>
    <property type="evidence" value="ECO:0000250"/>
    <property type="project" value="FlyBase"/>
</dbReference>
<dbReference type="InterPro" id="IPR009432">
    <property type="entry name" value="DUF1075"/>
</dbReference>
<dbReference type="PANTHER" id="PTHR13674">
    <property type="entry name" value="GROWTH AND TRANSFORMATION-DEPENDENT PROTEIN"/>
    <property type="match status" value="1"/>
</dbReference>
<dbReference type="PANTHER" id="PTHR13674:SF5">
    <property type="entry name" value="UPF0389 PROTEIN CG9231"/>
    <property type="match status" value="1"/>
</dbReference>
<dbReference type="Pfam" id="PF06388">
    <property type="entry name" value="DUF1075"/>
    <property type="match status" value="1"/>
</dbReference>
<name>U389_DROME</name>
<gene>
    <name type="ORF">CG9231</name>
</gene>
<accession>Q9VW12</accession>
<proteinExistence type="evidence at protein level"/>
<feature type="chain" id="PRO_0000254641" description="UPF0389 protein CG9231">
    <location>
        <begin position="1"/>
        <end position="125"/>
    </location>
</feature>
<feature type="transmembrane region" description="Helical" evidence="1">
    <location>
        <begin position="69"/>
        <end position="88"/>
    </location>
</feature>
<feature type="glycosylation site" description="N-linked (GlcNAc...) asparagine" evidence="2">
    <location>
        <position position="112"/>
    </location>
</feature>
<sequence length="125" mass="14104">MLSKTGLIGALVRRSFGTSQMLRETIKNHEPNNLERRMLVWTGKYKSQSEIPNFVSQDVMERCRNKMRIRLANIMIALTAVGCAIMVYSGKQAAKKGESVTKMNLEWHKQFNDSQQSEGSAPAAK</sequence>